<protein>
    <recommendedName>
        <fullName evidence="1">Phosphoribosylglycinamide formyltransferase</fullName>
        <ecNumber evidence="1">2.1.2.2</ecNumber>
    </recommendedName>
    <alternativeName>
        <fullName evidence="1">5'-phosphoribosylglycinamide transformylase</fullName>
    </alternativeName>
    <alternativeName>
        <fullName evidence="1">GAR transformylase</fullName>
        <shortName evidence="1">GART</shortName>
    </alternativeName>
</protein>
<sequence>MVKIAIFASGSGSNFENIVEHVESGKLENIEVTALYTDHQNAFCIDRAKKHDIPVYINEPKQFDSKAAYEQHLVSLLNEDKVEWIILAGYMRLIGPDLLASFEGKILNIHPSLLPKYKGIDAIGQAYHSGDTITGSTVHYVDCGMDTGEIIEQRQCDIRPDDSKEQLEEKVKKLEYELYPSVIAKIVK</sequence>
<keyword id="KW-0658">Purine biosynthesis</keyword>
<keyword id="KW-0808">Transferase</keyword>
<accession>Q6GAE1</accession>
<feature type="chain" id="PRO_0000074949" description="Phosphoribosylglycinamide formyltransferase">
    <location>
        <begin position="1"/>
        <end position="188"/>
    </location>
</feature>
<feature type="active site" description="Proton donor" evidence="1">
    <location>
        <position position="110"/>
    </location>
</feature>
<feature type="binding site" evidence="1">
    <location>
        <begin position="12"/>
        <end position="14"/>
    </location>
    <ligand>
        <name>N(1)-(5-phospho-beta-D-ribosyl)glycinamide</name>
        <dbReference type="ChEBI" id="CHEBI:143788"/>
    </ligand>
</feature>
<feature type="binding site" evidence="1">
    <location>
        <position position="66"/>
    </location>
    <ligand>
        <name>(6R)-10-formyltetrahydrofolate</name>
        <dbReference type="ChEBI" id="CHEBI:195366"/>
    </ligand>
</feature>
<feature type="binding site" evidence="1">
    <location>
        <begin position="91"/>
        <end position="94"/>
    </location>
    <ligand>
        <name>(6R)-10-formyltetrahydrofolate</name>
        <dbReference type="ChEBI" id="CHEBI:195366"/>
    </ligand>
</feature>
<feature type="binding site" evidence="1">
    <location>
        <position position="108"/>
    </location>
    <ligand>
        <name>(6R)-10-formyltetrahydrofolate</name>
        <dbReference type="ChEBI" id="CHEBI:195366"/>
    </ligand>
</feature>
<feature type="site" description="Raises pKa of active site His" evidence="1">
    <location>
        <position position="146"/>
    </location>
</feature>
<dbReference type="EC" id="2.1.2.2" evidence="1"/>
<dbReference type="EMBL" id="BX571857">
    <property type="protein sequence ID" value="CAG42782.1"/>
    <property type="molecule type" value="Genomic_DNA"/>
</dbReference>
<dbReference type="RefSeq" id="WP_000238663.1">
    <property type="nucleotide sequence ID" value="NC_002953.3"/>
</dbReference>
<dbReference type="SMR" id="Q6GAE1"/>
<dbReference type="KEGG" id="sas:SAS1008"/>
<dbReference type="HOGENOM" id="CLU_038395_1_3_9"/>
<dbReference type="UniPathway" id="UPA00074">
    <property type="reaction ID" value="UER00126"/>
</dbReference>
<dbReference type="GO" id="GO:0005829">
    <property type="term" value="C:cytosol"/>
    <property type="evidence" value="ECO:0007669"/>
    <property type="project" value="TreeGrafter"/>
</dbReference>
<dbReference type="GO" id="GO:0004644">
    <property type="term" value="F:phosphoribosylglycinamide formyltransferase activity"/>
    <property type="evidence" value="ECO:0007669"/>
    <property type="project" value="UniProtKB-UniRule"/>
</dbReference>
<dbReference type="GO" id="GO:0006189">
    <property type="term" value="P:'de novo' IMP biosynthetic process"/>
    <property type="evidence" value="ECO:0007669"/>
    <property type="project" value="UniProtKB-UniRule"/>
</dbReference>
<dbReference type="CDD" id="cd08645">
    <property type="entry name" value="FMT_core_GART"/>
    <property type="match status" value="1"/>
</dbReference>
<dbReference type="FunFam" id="3.40.50.170:FF:000014">
    <property type="entry name" value="Phosphoribosylglycinamide formyltransferase"/>
    <property type="match status" value="1"/>
</dbReference>
<dbReference type="Gene3D" id="3.40.50.170">
    <property type="entry name" value="Formyl transferase, N-terminal domain"/>
    <property type="match status" value="1"/>
</dbReference>
<dbReference type="HAMAP" id="MF_01930">
    <property type="entry name" value="PurN"/>
    <property type="match status" value="1"/>
</dbReference>
<dbReference type="InterPro" id="IPR002376">
    <property type="entry name" value="Formyl_transf_N"/>
</dbReference>
<dbReference type="InterPro" id="IPR036477">
    <property type="entry name" value="Formyl_transf_N_sf"/>
</dbReference>
<dbReference type="InterPro" id="IPR004607">
    <property type="entry name" value="GART"/>
</dbReference>
<dbReference type="NCBIfam" id="TIGR00639">
    <property type="entry name" value="PurN"/>
    <property type="match status" value="1"/>
</dbReference>
<dbReference type="PANTHER" id="PTHR43369">
    <property type="entry name" value="PHOSPHORIBOSYLGLYCINAMIDE FORMYLTRANSFERASE"/>
    <property type="match status" value="1"/>
</dbReference>
<dbReference type="PANTHER" id="PTHR43369:SF2">
    <property type="entry name" value="PHOSPHORIBOSYLGLYCINAMIDE FORMYLTRANSFERASE"/>
    <property type="match status" value="1"/>
</dbReference>
<dbReference type="Pfam" id="PF00551">
    <property type="entry name" value="Formyl_trans_N"/>
    <property type="match status" value="1"/>
</dbReference>
<dbReference type="SUPFAM" id="SSF53328">
    <property type="entry name" value="Formyltransferase"/>
    <property type="match status" value="1"/>
</dbReference>
<evidence type="ECO:0000255" key="1">
    <source>
        <dbReference type="HAMAP-Rule" id="MF_01930"/>
    </source>
</evidence>
<gene>
    <name evidence="1" type="primary">purN</name>
    <name type="ordered locus">SAS1008</name>
</gene>
<comment type="function">
    <text evidence="1">Catalyzes the transfer of a formyl group from 10-formyltetrahydrofolate to 5-phospho-ribosyl-glycinamide (GAR), producing 5-phospho-ribosyl-N-formylglycinamide (FGAR) and tetrahydrofolate.</text>
</comment>
<comment type="catalytic activity">
    <reaction evidence="1">
        <text>N(1)-(5-phospho-beta-D-ribosyl)glycinamide + (6R)-10-formyltetrahydrofolate = N(2)-formyl-N(1)-(5-phospho-beta-D-ribosyl)glycinamide + (6S)-5,6,7,8-tetrahydrofolate + H(+)</text>
        <dbReference type="Rhea" id="RHEA:15053"/>
        <dbReference type="ChEBI" id="CHEBI:15378"/>
        <dbReference type="ChEBI" id="CHEBI:57453"/>
        <dbReference type="ChEBI" id="CHEBI:143788"/>
        <dbReference type="ChEBI" id="CHEBI:147286"/>
        <dbReference type="ChEBI" id="CHEBI:195366"/>
        <dbReference type="EC" id="2.1.2.2"/>
    </reaction>
</comment>
<comment type="pathway">
    <text evidence="1">Purine metabolism; IMP biosynthesis via de novo pathway; N(2)-formyl-N(1)-(5-phospho-D-ribosyl)glycinamide from N(1)-(5-phospho-D-ribosyl)glycinamide (10-formyl THF route): step 1/1.</text>
</comment>
<comment type="similarity">
    <text evidence="1">Belongs to the GART family.</text>
</comment>
<organism>
    <name type="scientific">Staphylococcus aureus (strain MSSA476)</name>
    <dbReference type="NCBI Taxonomy" id="282459"/>
    <lineage>
        <taxon>Bacteria</taxon>
        <taxon>Bacillati</taxon>
        <taxon>Bacillota</taxon>
        <taxon>Bacilli</taxon>
        <taxon>Bacillales</taxon>
        <taxon>Staphylococcaceae</taxon>
        <taxon>Staphylococcus</taxon>
    </lineage>
</organism>
<name>PUR3_STAAS</name>
<proteinExistence type="inferred from homology"/>
<reference key="1">
    <citation type="journal article" date="2004" name="Proc. Natl. Acad. Sci. U.S.A.">
        <title>Complete genomes of two clinical Staphylococcus aureus strains: evidence for the rapid evolution of virulence and drug resistance.</title>
        <authorList>
            <person name="Holden M.T.G."/>
            <person name="Feil E.J."/>
            <person name="Lindsay J.A."/>
            <person name="Peacock S.J."/>
            <person name="Day N.P.J."/>
            <person name="Enright M.C."/>
            <person name="Foster T.J."/>
            <person name="Moore C.E."/>
            <person name="Hurst L."/>
            <person name="Atkin R."/>
            <person name="Barron A."/>
            <person name="Bason N."/>
            <person name="Bentley S.D."/>
            <person name="Chillingworth C."/>
            <person name="Chillingworth T."/>
            <person name="Churcher C."/>
            <person name="Clark L."/>
            <person name="Corton C."/>
            <person name="Cronin A."/>
            <person name="Doggett J."/>
            <person name="Dowd L."/>
            <person name="Feltwell T."/>
            <person name="Hance Z."/>
            <person name="Harris B."/>
            <person name="Hauser H."/>
            <person name="Holroyd S."/>
            <person name="Jagels K."/>
            <person name="James K.D."/>
            <person name="Lennard N."/>
            <person name="Line A."/>
            <person name="Mayes R."/>
            <person name="Moule S."/>
            <person name="Mungall K."/>
            <person name="Ormond D."/>
            <person name="Quail M.A."/>
            <person name="Rabbinowitsch E."/>
            <person name="Rutherford K.M."/>
            <person name="Sanders M."/>
            <person name="Sharp S."/>
            <person name="Simmonds M."/>
            <person name="Stevens K."/>
            <person name="Whitehead S."/>
            <person name="Barrell B.G."/>
            <person name="Spratt B.G."/>
            <person name="Parkhill J."/>
        </authorList>
    </citation>
    <scope>NUCLEOTIDE SEQUENCE [LARGE SCALE GENOMIC DNA]</scope>
    <source>
        <strain>MSSA476</strain>
    </source>
</reference>